<sequence>TIGVCYGVVANNLPPANEVVQLYRSNGLTGMRIYFADAKALSALRGSGIGLILDVGGNDVLASLAANASNAANWVRDNVRPYYPAVNIKYIAAGNEVWGGDTQNIVPAMRNLGAALKAPGLGTIKVSTSIRFDAVTNTFPPSNGVFAQAYMTDVARLLASTGAPLLTNVYPYFAYKDNPRDIQLNYATFRPGTTTVRDPNTGLTSQCLFDAMVDAVVAALERSGAPGVRVVVSESGWPSASGFAATADNARAYNQGLIDHVGGGTPKRPGALETYIFAMFNENFKTGELTEKHFGLFNPDKSPAYPIRFQ</sequence>
<evidence type="ECO:0000250" key="1">
    <source>
        <dbReference type="UniProtKB" id="O22317"/>
    </source>
</evidence>
<evidence type="ECO:0000305" key="2"/>
<protein>
    <recommendedName>
        <fullName>Glucan endo-1,3-beta-glucosidase GI</fullName>
        <ecNumber>3.2.1.39</ecNumber>
    </recommendedName>
    <alternativeName>
        <fullName>(1-&gt;3)-beta-glucan endohydrolase GI</fullName>
    </alternativeName>
    <alternativeName>
        <fullName>(1-&gt;3)-beta-glucanase isoenzyme GI</fullName>
    </alternativeName>
    <alternativeName>
        <fullName>Beta-1,3-endoglucanase GI</fullName>
    </alternativeName>
</protein>
<dbReference type="EC" id="3.2.1.39"/>
<dbReference type="EMBL" id="M96938">
    <property type="protein sequence ID" value="AAA32960.1"/>
    <property type="molecule type" value="mRNA"/>
</dbReference>
<dbReference type="PIR" id="JC1434">
    <property type="entry name" value="JC1434"/>
</dbReference>
<dbReference type="SMR" id="P34742"/>
<dbReference type="CAZy" id="GH17">
    <property type="family name" value="Glycoside Hydrolase Family 17"/>
</dbReference>
<dbReference type="SABIO-RK" id="P34742"/>
<dbReference type="ExpressionAtlas" id="P34742">
    <property type="expression patterns" value="baseline and differential"/>
</dbReference>
<dbReference type="GO" id="GO:0042973">
    <property type="term" value="F:glucan endo-1,3-beta-D-glucosidase activity"/>
    <property type="evidence" value="ECO:0007669"/>
    <property type="project" value="UniProtKB-EC"/>
</dbReference>
<dbReference type="GO" id="GO:0005975">
    <property type="term" value="P:carbohydrate metabolic process"/>
    <property type="evidence" value="ECO:0007669"/>
    <property type="project" value="InterPro"/>
</dbReference>
<dbReference type="GO" id="GO:0006952">
    <property type="term" value="P:defense response"/>
    <property type="evidence" value="ECO:0007669"/>
    <property type="project" value="UniProtKB-KW"/>
</dbReference>
<dbReference type="FunFam" id="3.20.20.80:FF:000010">
    <property type="entry name" value="glucan endo-1,3-beta-glucosidase, basic"/>
    <property type="match status" value="1"/>
</dbReference>
<dbReference type="Gene3D" id="3.20.20.80">
    <property type="entry name" value="Glycosidases"/>
    <property type="match status" value="1"/>
</dbReference>
<dbReference type="InterPro" id="IPR000490">
    <property type="entry name" value="Glyco_hydro_17"/>
</dbReference>
<dbReference type="InterPro" id="IPR044965">
    <property type="entry name" value="Glyco_hydro_17_plant"/>
</dbReference>
<dbReference type="InterPro" id="IPR017853">
    <property type="entry name" value="Glycoside_hydrolase_SF"/>
</dbReference>
<dbReference type="PANTHER" id="PTHR32227">
    <property type="entry name" value="GLUCAN ENDO-1,3-BETA-GLUCOSIDASE BG1-RELATED-RELATED"/>
    <property type="match status" value="1"/>
</dbReference>
<dbReference type="Pfam" id="PF00332">
    <property type="entry name" value="Glyco_hydro_17"/>
    <property type="match status" value="1"/>
</dbReference>
<dbReference type="SUPFAM" id="SSF51445">
    <property type="entry name" value="(Trans)glycosidases"/>
    <property type="match status" value="1"/>
</dbReference>
<dbReference type="PROSITE" id="PS00587">
    <property type="entry name" value="GLYCOSYL_HYDROL_F17"/>
    <property type="match status" value="1"/>
</dbReference>
<name>E13A_HORVU</name>
<feature type="chain" id="PRO_0000205273" description="Glucan endo-1,3-beta-glucosidase GI">
    <location>
        <begin position="1"/>
        <end position="310"/>
    </location>
</feature>
<feature type="active site" description="Proton donor" evidence="1">
    <location>
        <position position="96"/>
    </location>
</feature>
<feature type="active site" description="Nucleophile" evidence="1">
    <location>
        <position position="234"/>
    </location>
</feature>
<feature type="sequence conflict" description="In Ref. 2; AA sequence." evidence="2" ref="2">
    <original>ADA</original>
    <variation>TDT</variation>
    <location>
        <begin position="36"/>
        <end position="38"/>
    </location>
</feature>
<feature type="sequence conflict" description="In Ref. 2; AA sequence." evidence="2" ref="2">
    <original>R</original>
    <variation>S</variation>
    <location>
        <position position="45"/>
    </location>
</feature>
<accession>P34742</accession>
<reference key="1">
    <citation type="journal article" date="1992" name="Gene">
        <title>Evolution and differential expression of the (1--&gt;3)-beta-glucan endohydrolase-encoding gene family in barley, Hordeum vulgare.</title>
        <authorList>
            <person name="Xu P."/>
            <person name="Wang J."/>
            <person name="Fincher G.B."/>
        </authorList>
    </citation>
    <scope>NUCLEOTIDE SEQUENCE [MRNA] OF 5-310</scope>
    <source>
        <strain>cv. Clipper</strain>
        <tissue>Leaf</tissue>
        <tissue>Root</tissue>
    </source>
</reference>
<reference key="2">
    <citation type="journal article" date="1988" name="FEBS Lett.">
        <title>Isolation and characterization of a (1--&gt;3)-beta-glucan endohydrolase from germinating barley (Hordeum vulgare): amino acid sequence similarity with barley (1--&gt;3,1--&gt;4)-beta-glucanases.</title>
        <authorList>
            <person name="Hoej P.B."/>
            <person name="Slade A.M."/>
            <person name="Wettenhall R.E.H."/>
            <person name="Fincher G.B."/>
        </authorList>
    </citation>
    <scope>PROTEIN SEQUENCE OF 1-46</scope>
    <source>
        <tissue>Seed</tissue>
    </source>
</reference>
<reference key="3">
    <citation type="journal article" date="1993" name="Biochem. J.">
        <title>Purification and properties of three (1--&gt;3)-beta-D-glucanase isoenzymes from young leaves of barley (Hordeum vulgare).</title>
        <authorList>
            <person name="Hrmova M."/>
            <person name="Fincher G.B."/>
        </authorList>
    </citation>
    <scope>PROTEIN SEQUENCE OF 1-13</scope>
    <scope>CHARACTERIZATION</scope>
</reference>
<proteinExistence type="evidence at protein level"/>
<keyword id="KW-0903">Direct protein sequencing</keyword>
<keyword id="KW-0326">Glycosidase</keyword>
<keyword id="KW-0378">Hydrolase</keyword>
<keyword id="KW-0611">Plant defense</keyword>
<comment type="function">
    <text>May provide a degree of protection against microbial invasion of germinated barley grain through its ability to degrade fungal cell wall polysaccharides. Does not hydrolyze (1,3;1,4)-beta-D-glucans, (1,6)-beta-D-glucan, CM-cellulose, insoluble (1,3)-beta-D-glucans or aryl beta-D-glycosides.</text>
</comment>
<comment type="catalytic activity">
    <reaction>
        <text>Hydrolysis of (1-&gt;3)-beta-D-glucosidic linkages in (1-&gt;3)-beta-D-glucans.</text>
        <dbReference type="EC" id="3.2.1.39"/>
    </reaction>
</comment>
<comment type="biophysicochemical properties">
    <phDependence>
        <text>Optimum pH is 4.8.</text>
    </phDependence>
</comment>
<comment type="subunit">
    <text>Monomer.</text>
</comment>
<comment type="tissue specificity">
    <text>Young leaves and roots.</text>
</comment>
<comment type="developmental stage">
    <text>First detected in young leaves ten days after initiation of germination. Also detected in young roots but not in mature leaves or roots.</text>
</comment>
<comment type="similarity">
    <text evidence="2">Belongs to the glycosyl hydrolase 17 family.</text>
</comment>
<organism>
    <name type="scientific">Hordeum vulgare</name>
    <name type="common">Barley</name>
    <dbReference type="NCBI Taxonomy" id="4513"/>
    <lineage>
        <taxon>Eukaryota</taxon>
        <taxon>Viridiplantae</taxon>
        <taxon>Streptophyta</taxon>
        <taxon>Embryophyta</taxon>
        <taxon>Tracheophyta</taxon>
        <taxon>Spermatophyta</taxon>
        <taxon>Magnoliopsida</taxon>
        <taxon>Liliopsida</taxon>
        <taxon>Poales</taxon>
        <taxon>Poaceae</taxon>
        <taxon>BOP clade</taxon>
        <taxon>Pooideae</taxon>
        <taxon>Triticodae</taxon>
        <taxon>Triticeae</taxon>
        <taxon>Hordeinae</taxon>
        <taxon>Hordeum</taxon>
    </lineage>
</organism>